<evidence type="ECO:0000250" key="1"/>
<evidence type="ECO:0000250" key="2">
    <source>
        <dbReference type="UniProtKB" id="P58340"/>
    </source>
</evidence>
<evidence type="ECO:0000250" key="3">
    <source>
        <dbReference type="UniProtKB" id="Q9QWV4"/>
    </source>
</evidence>
<evidence type="ECO:0000256" key="4">
    <source>
        <dbReference type="SAM" id="MobiDB-lite"/>
    </source>
</evidence>
<evidence type="ECO:0000305" key="5"/>
<dbReference type="EMBL" id="BC109859">
    <property type="protein sequence ID" value="AAI09860.1"/>
    <property type="molecule type" value="mRNA"/>
</dbReference>
<dbReference type="RefSeq" id="NP_001033247.1">
    <property type="nucleotide sequence ID" value="NM_001038158.2"/>
</dbReference>
<dbReference type="FunCoup" id="Q32KY3">
    <property type="interactions" value="57"/>
</dbReference>
<dbReference type="STRING" id="9913.ENSBTAP00000060549"/>
<dbReference type="PaxDb" id="9913-ENSBTAP00000005403"/>
<dbReference type="Ensembl" id="ENSBTAT00000005403.5">
    <property type="protein sequence ID" value="ENSBTAP00000005403.3"/>
    <property type="gene ID" value="ENSBTAG00000004126.5"/>
</dbReference>
<dbReference type="GeneID" id="533379"/>
<dbReference type="KEGG" id="bta:533379"/>
<dbReference type="CTD" id="4291"/>
<dbReference type="VEuPathDB" id="HostDB:ENSBTAG00000004126"/>
<dbReference type="eggNOG" id="KOG4049">
    <property type="taxonomic scope" value="Eukaryota"/>
</dbReference>
<dbReference type="GeneTree" id="ENSGT00390000005023"/>
<dbReference type="HOGENOM" id="CLU_063313_0_1_1"/>
<dbReference type="InParanoid" id="Q32KY3"/>
<dbReference type="OrthoDB" id="8707547at2759"/>
<dbReference type="TreeFam" id="TF317561"/>
<dbReference type="Proteomes" id="UP000009136">
    <property type="component" value="Chromosome 1"/>
</dbReference>
<dbReference type="Bgee" id="ENSBTAG00000004126">
    <property type="expression patterns" value="Expressed in semen and 105 other cell types or tissues"/>
</dbReference>
<dbReference type="GO" id="GO:0036064">
    <property type="term" value="C:ciliary basal body"/>
    <property type="evidence" value="ECO:0000250"/>
    <property type="project" value="UniProtKB"/>
</dbReference>
<dbReference type="GO" id="GO:0005929">
    <property type="term" value="C:cilium"/>
    <property type="evidence" value="ECO:0000250"/>
    <property type="project" value="UniProtKB"/>
</dbReference>
<dbReference type="GO" id="GO:0005737">
    <property type="term" value="C:cytoplasm"/>
    <property type="evidence" value="ECO:0000250"/>
    <property type="project" value="UniProtKB"/>
</dbReference>
<dbReference type="GO" id="GO:0005634">
    <property type="term" value="C:nucleus"/>
    <property type="evidence" value="ECO:0000250"/>
    <property type="project" value="UniProtKB"/>
</dbReference>
<dbReference type="GO" id="GO:0003677">
    <property type="term" value="F:DNA binding"/>
    <property type="evidence" value="ECO:0000250"/>
    <property type="project" value="UniProtKB"/>
</dbReference>
<dbReference type="GO" id="GO:0006351">
    <property type="term" value="P:DNA-templated transcription"/>
    <property type="evidence" value="ECO:0000250"/>
    <property type="project" value="UniProtKB"/>
</dbReference>
<dbReference type="GO" id="GO:0002318">
    <property type="term" value="P:myeloid progenitor cell differentiation"/>
    <property type="evidence" value="ECO:0000250"/>
    <property type="project" value="UniProtKB"/>
</dbReference>
<dbReference type="GO" id="GO:1902806">
    <property type="term" value="P:regulation of cell cycle G1/S phase transition"/>
    <property type="evidence" value="ECO:0000250"/>
    <property type="project" value="UniProtKB"/>
</dbReference>
<dbReference type="GO" id="GO:0006355">
    <property type="term" value="P:regulation of DNA-templated transcription"/>
    <property type="evidence" value="ECO:0000318"/>
    <property type="project" value="GO_Central"/>
</dbReference>
<dbReference type="InterPro" id="IPR019376">
    <property type="entry name" value="Myeloid_leukemia_factor"/>
</dbReference>
<dbReference type="PANTHER" id="PTHR13105">
    <property type="entry name" value="MYELOID LEUKEMIA FACTOR"/>
    <property type="match status" value="1"/>
</dbReference>
<dbReference type="Pfam" id="PF10248">
    <property type="entry name" value="Mlf1IP"/>
    <property type="match status" value="1"/>
</dbReference>
<proteinExistence type="evidence at transcript level"/>
<accession>Q32KY3</accession>
<comment type="function">
    <text evidence="1">Involved in lineage commitment of primary hemopoietic progenitors by restricting erythroid formation and enhancing myeloid formation. Interferes with erythropoietin-induced erythroid terminal differentiation by preventing cells from exiting the cell cycle through suppression of CDKN1B/p27Kip1 levels. Suppresses COP1 activity via CSN3 which activates p53 and induces cell cycle arrest. Binds DNA and affects the expression of a number of genes so may function as a transcription factor in the nucleus (By similarity).</text>
</comment>
<comment type="subunit">
    <text evidence="1">Interacts with CENPU. Also interacts with NRBP1/MADM, YWHAZ/14-3-3-zeta and HNRPUL2/MANP. NRBP1 recruits a serine kinase which phosphorylates both itself and MLF1. Phosphorylated MLF1 then binds to YWHAZ and is retained in the cytoplasm. Retained in the nucleus by binding to HNRPUL2. Binds to COPS3/CSN3 which is required for suppression of COP1 and activation of p53 (By similarity).</text>
</comment>
<comment type="subcellular location">
    <subcellularLocation>
        <location evidence="3">Cytoplasm</location>
    </subcellularLocation>
    <subcellularLocation>
        <location evidence="3">Nucleus</location>
    </subcellularLocation>
    <subcellularLocation>
        <location evidence="3">Cell projection</location>
        <location evidence="3">Cilium</location>
    </subcellularLocation>
    <subcellularLocation>
        <location evidence="3">Cytoplasm</location>
        <location evidence="3">Cytoskeleton</location>
        <location evidence="3">Cilium basal body</location>
    </subcellularLocation>
    <text evidence="3">Shuttles between the cytoplasm and nucleus.</text>
</comment>
<comment type="PTM">
    <text evidence="1">Phosphorylation is required for binding to YWHAZ.</text>
</comment>
<comment type="similarity">
    <text evidence="5">Belongs to the MLF family.</text>
</comment>
<organism>
    <name type="scientific">Bos taurus</name>
    <name type="common">Bovine</name>
    <dbReference type="NCBI Taxonomy" id="9913"/>
    <lineage>
        <taxon>Eukaryota</taxon>
        <taxon>Metazoa</taxon>
        <taxon>Chordata</taxon>
        <taxon>Craniata</taxon>
        <taxon>Vertebrata</taxon>
        <taxon>Euteleostomi</taxon>
        <taxon>Mammalia</taxon>
        <taxon>Eutheria</taxon>
        <taxon>Laurasiatheria</taxon>
        <taxon>Artiodactyla</taxon>
        <taxon>Ruminantia</taxon>
        <taxon>Pecora</taxon>
        <taxon>Bovidae</taxon>
        <taxon>Bovinae</taxon>
        <taxon>Bos</taxon>
    </lineage>
</organism>
<reference key="1">
    <citation type="submission" date="2005-11" db="EMBL/GenBank/DDBJ databases">
        <authorList>
            <consortium name="NIH - Mammalian Gene Collection (MGC) project"/>
        </authorList>
    </citation>
    <scope>NUCLEOTIDE SEQUENCE [LARGE SCALE MRNA]</scope>
    <source>
        <strain>Crossbred X Angus</strain>
        <tissue>Liver</tissue>
    </source>
</reference>
<gene>
    <name type="primary">MLF1</name>
</gene>
<keyword id="KW-0131">Cell cycle</keyword>
<keyword id="KW-0966">Cell projection</keyword>
<keyword id="KW-0963">Cytoplasm</keyword>
<keyword id="KW-0206">Cytoskeleton</keyword>
<keyword id="KW-0217">Developmental protein</keyword>
<keyword id="KW-0221">Differentiation</keyword>
<keyword id="KW-0238">DNA-binding</keyword>
<keyword id="KW-0539">Nucleus</keyword>
<keyword id="KW-0597">Phosphoprotein</keyword>
<keyword id="KW-1185">Reference proteome</keyword>
<name>MLF1_BOVIN</name>
<feature type="chain" id="PRO_0000247598" description="Myeloid leukemia factor 1">
    <location>
        <begin position="1"/>
        <end position="270"/>
    </location>
</feature>
<feature type="region of interest" description="Interaction with COPS3" evidence="1">
    <location>
        <begin position="50"/>
        <end position="125"/>
    </location>
</feature>
<feature type="region of interest" description="Disordered" evidence="4">
    <location>
        <begin position="127"/>
        <end position="148"/>
    </location>
</feature>
<feature type="region of interest" description="Disordered" evidence="4">
    <location>
        <begin position="221"/>
        <end position="247"/>
    </location>
</feature>
<feature type="compositionally biased region" description="Basic and acidic residues" evidence="4">
    <location>
        <begin position="138"/>
        <end position="148"/>
    </location>
</feature>
<feature type="modified residue" description="Phosphoserine" evidence="3">
    <location>
        <position position="6"/>
    </location>
</feature>
<feature type="modified residue" description="Phosphoserine" evidence="2">
    <location>
        <position position="8"/>
    </location>
</feature>
<feature type="modified residue" description="Phosphoserine" evidence="2">
    <location>
        <position position="32"/>
    </location>
</feature>
<feature type="modified residue" description="Phosphoserine" evidence="2">
    <location>
        <position position="34"/>
    </location>
</feature>
<protein>
    <recommendedName>
        <fullName>Myeloid leukemia factor 1</fullName>
    </recommendedName>
    <alternativeName>
        <fullName>Myelodysplasia-myeloid leukemia factor 1</fullName>
    </alternativeName>
</protein>
<sequence length="270" mass="31227">MFGMLSSSFEDDPFFSDSFIAHRESMRQMMRSFSEPFGRDMLSISDRRGRARNRMGHEDEENSLTHTDVSPFQAMDRMMLNMRNSMQELQRNFGHLSMDPNGHSFSSSSVMTYSKVGDEPPKVFQASTQTRRAPGGIKETRKALRDSDSGLEKMAVGHHLHDRAHVIKKSKNNKTGDEEVNQEFINMNECDAHAFDDEWQNEILKYQPRGQWRNLDNSRMRSVAHENSGSRELKRREKHHQSPAIEHGRRSNVFVDKLNIKGSPVKINKK</sequence>